<keyword id="KW-0067">ATP-binding</keyword>
<keyword id="KW-0227">DNA damage</keyword>
<keyword id="KW-0234">DNA repair</keyword>
<keyword id="KW-0238">DNA-binding</keyword>
<keyword id="KW-0547">Nucleotide-binding</keyword>
<keyword id="KW-1185">Reference proteome</keyword>
<dbReference type="EMBL" id="CP000038">
    <property type="protein sequence ID" value="AAZ89483.1"/>
    <property type="molecule type" value="Genomic_DNA"/>
</dbReference>
<dbReference type="RefSeq" id="WP_001272924.1">
    <property type="nucleotide sequence ID" value="NC_007384.1"/>
</dbReference>
<dbReference type="SMR" id="Q3YYC9"/>
<dbReference type="GeneID" id="93779275"/>
<dbReference type="KEGG" id="ssn:SSON_2880"/>
<dbReference type="HOGENOM" id="CLU_002472_4_0_6"/>
<dbReference type="Proteomes" id="UP000002529">
    <property type="component" value="Chromosome"/>
</dbReference>
<dbReference type="GO" id="GO:0005829">
    <property type="term" value="C:cytosol"/>
    <property type="evidence" value="ECO:0007669"/>
    <property type="project" value="TreeGrafter"/>
</dbReference>
<dbReference type="GO" id="GO:0005524">
    <property type="term" value="F:ATP binding"/>
    <property type="evidence" value="ECO:0007669"/>
    <property type="project" value="UniProtKB-UniRule"/>
</dbReference>
<dbReference type="GO" id="GO:0140664">
    <property type="term" value="F:ATP-dependent DNA damage sensor activity"/>
    <property type="evidence" value="ECO:0007669"/>
    <property type="project" value="InterPro"/>
</dbReference>
<dbReference type="GO" id="GO:0003684">
    <property type="term" value="F:damaged DNA binding"/>
    <property type="evidence" value="ECO:0007669"/>
    <property type="project" value="UniProtKB-UniRule"/>
</dbReference>
<dbReference type="GO" id="GO:0030983">
    <property type="term" value="F:mismatched DNA binding"/>
    <property type="evidence" value="ECO:0007669"/>
    <property type="project" value="InterPro"/>
</dbReference>
<dbReference type="GO" id="GO:0006298">
    <property type="term" value="P:mismatch repair"/>
    <property type="evidence" value="ECO:0007669"/>
    <property type="project" value="UniProtKB-UniRule"/>
</dbReference>
<dbReference type="CDD" id="cd03284">
    <property type="entry name" value="ABC_MutS1"/>
    <property type="match status" value="1"/>
</dbReference>
<dbReference type="FunFam" id="1.10.1420.10:FF:000002">
    <property type="entry name" value="DNA mismatch repair protein MutS"/>
    <property type="match status" value="1"/>
</dbReference>
<dbReference type="FunFam" id="3.30.420.110:FF:000001">
    <property type="entry name" value="DNA mismatch repair protein MutS"/>
    <property type="match status" value="1"/>
</dbReference>
<dbReference type="FunFam" id="3.40.1170.10:FF:000001">
    <property type="entry name" value="DNA mismatch repair protein MutS"/>
    <property type="match status" value="1"/>
</dbReference>
<dbReference type="FunFam" id="3.40.50.300:FF:000283">
    <property type="entry name" value="DNA mismatch repair protein MutS"/>
    <property type="match status" value="1"/>
</dbReference>
<dbReference type="Gene3D" id="1.10.1420.10">
    <property type="match status" value="2"/>
</dbReference>
<dbReference type="Gene3D" id="6.10.140.430">
    <property type="match status" value="1"/>
</dbReference>
<dbReference type="Gene3D" id="3.40.1170.10">
    <property type="entry name" value="DNA repair protein MutS, domain I"/>
    <property type="match status" value="1"/>
</dbReference>
<dbReference type="Gene3D" id="3.30.420.110">
    <property type="entry name" value="MutS, connector domain"/>
    <property type="match status" value="1"/>
</dbReference>
<dbReference type="Gene3D" id="3.40.50.300">
    <property type="entry name" value="P-loop containing nucleotide triphosphate hydrolases"/>
    <property type="match status" value="1"/>
</dbReference>
<dbReference type="HAMAP" id="MF_00096">
    <property type="entry name" value="MutS"/>
    <property type="match status" value="1"/>
</dbReference>
<dbReference type="InterPro" id="IPR005748">
    <property type="entry name" value="DNA_mismatch_repair_MutS"/>
</dbReference>
<dbReference type="InterPro" id="IPR007695">
    <property type="entry name" value="DNA_mismatch_repair_MutS-lik_N"/>
</dbReference>
<dbReference type="InterPro" id="IPR017261">
    <property type="entry name" value="DNA_mismatch_repair_MutS/MSH"/>
</dbReference>
<dbReference type="InterPro" id="IPR000432">
    <property type="entry name" value="DNA_mismatch_repair_MutS_C"/>
</dbReference>
<dbReference type="InterPro" id="IPR007861">
    <property type="entry name" value="DNA_mismatch_repair_MutS_clamp"/>
</dbReference>
<dbReference type="InterPro" id="IPR007696">
    <property type="entry name" value="DNA_mismatch_repair_MutS_core"/>
</dbReference>
<dbReference type="InterPro" id="IPR016151">
    <property type="entry name" value="DNA_mismatch_repair_MutS_N"/>
</dbReference>
<dbReference type="InterPro" id="IPR036187">
    <property type="entry name" value="DNA_mismatch_repair_MutS_sf"/>
</dbReference>
<dbReference type="InterPro" id="IPR007860">
    <property type="entry name" value="DNA_mmatch_repair_MutS_con_dom"/>
</dbReference>
<dbReference type="InterPro" id="IPR045076">
    <property type="entry name" value="MutS"/>
</dbReference>
<dbReference type="InterPro" id="IPR036678">
    <property type="entry name" value="MutS_con_dom_sf"/>
</dbReference>
<dbReference type="InterPro" id="IPR027417">
    <property type="entry name" value="P-loop_NTPase"/>
</dbReference>
<dbReference type="NCBIfam" id="TIGR01070">
    <property type="entry name" value="mutS1"/>
    <property type="match status" value="1"/>
</dbReference>
<dbReference type="NCBIfam" id="NF003810">
    <property type="entry name" value="PRK05399.1"/>
    <property type="match status" value="1"/>
</dbReference>
<dbReference type="PANTHER" id="PTHR11361:SF34">
    <property type="entry name" value="DNA MISMATCH REPAIR PROTEIN MSH1, MITOCHONDRIAL"/>
    <property type="match status" value="1"/>
</dbReference>
<dbReference type="PANTHER" id="PTHR11361">
    <property type="entry name" value="DNA MISMATCH REPAIR PROTEIN MUTS FAMILY MEMBER"/>
    <property type="match status" value="1"/>
</dbReference>
<dbReference type="Pfam" id="PF01624">
    <property type="entry name" value="MutS_I"/>
    <property type="match status" value="1"/>
</dbReference>
<dbReference type="Pfam" id="PF05188">
    <property type="entry name" value="MutS_II"/>
    <property type="match status" value="1"/>
</dbReference>
<dbReference type="Pfam" id="PF05192">
    <property type="entry name" value="MutS_III"/>
    <property type="match status" value="1"/>
</dbReference>
<dbReference type="Pfam" id="PF05190">
    <property type="entry name" value="MutS_IV"/>
    <property type="match status" value="1"/>
</dbReference>
<dbReference type="Pfam" id="PF00488">
    <property type="entry name" value="MutS_V"/>
    <property type="match status" value="1"/>
</dbReference>
<dbReference type="PIRSF" id="PIRSF037677">
    <property type="entry name" value="DNA_mis_repair_Msh6"/>
    <property type="match status" value="1"/>
</dbReference>
<dbReference type="SMART" id="SM00534">
    <property type="entry name" value="MUTSac"/>
    <property type="match status" value="1"/>
</dbReference>
<dbReference type="SMART" id="SM00533">
    <property type="entry name" value="MUTSd"/>
    <property type="match status" value="1"/>
</dbReference>
<dbReference type="SUPFAM" id="SSF55271">
    <property type="entry name" value="DNA repair protein MutS, domain I"/>
    <property type="match status" value="1"/>
</dbReference>
<dbReference type="SUPFAM" id="SSF53150">
    <property type="entry name" value="DNA repair protein MutS, domain II"/>
    <property type="match status" value="1"/>
</dbReference>
<dbReference type="SUPFAM" id="SSF48334">
    <property type="entry name" value="DNA repair protein MutS, domain III"/>
    <property type="match status" value="1"/>
</dbReference>
<dbReference type="SUPFAM" id="SSF52540">
    <property type="entry name" value="P-loop containing nucleoside triphosphate hydrolases"/>
    <property type="match status" value="1"/>
</dbReference>
<dbReference type="PROSITE" id="PS00486">
    <property type="entry name" value="DNA_MISMATCH_REPAIR_2"/>
    <property type="match status" value="1"/>
</dbReference>
<proteinExistence type="inferred from homology"/>
<gene>
    <name evidence="1" type="primary">mutS</name>
    <name type="ordered locus">SSON_2880</name>
</gene>
<feature type="chain" id="PRO_0000224405" description="DNA mismatch repair protein MutS">
    <location>
        <begin position="1"/>
        <end position="853"/>
    </location>
</feature>
<feature type="binding site" evidence="1">
    <location>
        <begin position="614"/>
        <end position="621"/>
    </location>
    <ligand>
        <name>ATP</name>
        <dbReference type="ChEBI" id="CHEBI:30616"/>
    </ligand>
</feature>
<evidence type="ECO:0000255" key="1">
    <source>
        <dbReference type="HAMAP-Rule" id="MF_00096"/>
    </source>
</evidence>
<sequence length="853" mass="95319">MSAIENFDAHTPMMQQYLRLKAQHPEILLFYRMGDFYELFYDDAKRASQLLDISLTKRGASAGEPIPMAGIPYHAVENYLAKLVNQGESVAICEQIGDPATSKGPVERKVVRIVTPGTISDEALLQERQDNLLAAIWQDSKGFGYATLDISSGRFRLSEPADRETMAAELQRTNPAELLYAEDFAEMSLIEGRRGLRRRPLWEFEIDTARQQLNLQFGTRDLVGFGVENAPRGLCAAGCLLQYAKDTQRTTLPHIRSITMEREQDSIIMDAATRRNLEITQNLAGGAENTLASVLDCTVTPMGSRMLKRWLHMPVRDTRVLLERQQTIGALQDFTAELQPVLRQVGDLERILARLALRTARPRDLARMRHAFQQLPELRAQLETVDSAPVQALREKMGEFAELRDLLERAIIDTPPVLVRDGGVIASGYNEELDEWRALADGATDYLERLEVRERERTGLDTLKVGFNAVHGYYIQISRGQSHLAPINYMRRQTLKNAERYIIPELKEYEDKVLTSKGKALALEKQLYEELFDLLLPHLEALQQSASALAELDVLVNLAERAYTLNYTCPTFIDKPGIRITEGRHPVVEQVLNEPFIANPLNLSPQRRMLIITGPNMGGKSTYMRQTALIALMAYIGSYVPAQKVEIGPIDRIFTRVGAADDLASGRSTFMVEMTETANILHNATEYSLVLMDEIGRGTSTYDGLSLAWACAENLANKIKALTLFATHYFELTQLPEKMEGVANVHLDALEHGDTIAFMHSVQDGAASKSYGLAVAALAGVPKEVIKRARQKLRELESISPNAAATQVDGTQMSLLSVPEETSPAVEALENLDPDSLTPRQALEWIYRLKSLV</sequence>
<organism>
    <name type="scientific">Shigella sonnei (strain Ss046)</name>
    <dbReference type="NCBI Taxonomy" id="300269"/>
    <lineage>
        <taxon>Bacteria</taxon>
        <taxon>Pseudomonadati</taxon>
        <taxon>Pseudomonadota</taxon>
        <taxon>Gammaproteobacteria</taxon>
        <taxon>Enterobacterales</taxon>
        <taxon>Enterobacteriaceae</taxon>
        <taxon>Shigella</taxon>
    </lineage>
</organism>
<accession>Q3YYC9</accession>
<reference key="1">
    <citation type="journal article" date="2005" name="Nucleic Acids Res.">
        <title>Genome dynamics and diversity of Shigella species, the etiologic agents of bacillary dysentery.</title>
        <authorList>
            <person name="Yang F."/>
            <person name="Yang J."/>
            <person name="Zhang X."/>
            <person name="Chen L."/>
            <person name="Jiang Y."/>
            <person name="Yan Y."/>
            <person name="Tang X."/>
            <person name="Wang J."/>
            <person name="Xiong Z."/>
            <person name="Dong J."/>
            <person name="Xue Y."/>
            <person name="Zhu Y."/>
            <person name="Xu X."/>
            <person name="Sun L."/>
            <person name="Chen S."/>
            <person name="Nie H."/>
            <person name="Peng J."/>
            <person name="Xu J."/>
            <person name="Wang Y."/>
            <person name="Yuan Z."/>
            <person name="Wen Y."/>
            <person name="Yao Z."/>
            <person name="Shen Y."/>
            <person name="Qiang B."/>
            <person name="Hou Y."/>
            <person name="Yu J."/>
            <person name="Jin Q."/>
        </authorList>
    </citation>
    <scope>NUCLEOTIDE SEQUENCE [LARGE SCALE GENOMIC DNA]</scope>
    <source>
        <strain>Ss046</strain>
    </source>
</reference>
<name>MUTS_SHISS</name>
<comment type="function">
    <text evidence="1">This protein is involved in the repair of mismatches in DNA. It is possible that it carries out the mismatch recognition step. This protein has a weak ATPase activity.</text>
</comment>
<comment type="similarity">
    <text evidence="1">Belongs to the DNA mismatch repair MutS family.</text>
</comment>
<protein>
    <recommendedName>
        <fullName evidence="1">DNA mismatch repair protein MutS</fullName>
    </recommendedName>
</protein>